<proteinExistence type="inferred from homology"/>
<organism>
    <name type="scientific">Salmonella dublin (strain CT_02021853)</name>
    <dbReference type="NCBI Taxonomy" id="439851"/>
    <lineage>
        <taxon>Bacteria</taxon>
        <taxon>Pseudomonadati</taxon>
        <taxon>Pseudomonadota</taxon>
        <taxon>Gammaproteobacteria</taxon>
        <taxon>Enterobacterales</taxon>
        <taxon>Enterobacteriaceae</taxon>
        <taxon>Salmonella</taxon>
    </lineage>
</organism>
<keyword id="KW-0963">Cytoplasm</keyword>
<keyword id="KW-0226">DNA condensation</keyword>
<keyword id="KW-0238">DNA-binding</keyword>
<keyword id="KW-0408">Iron</keyword>
<keyword id="KW-0409">Iron storage</keyword>
<keyword id="KW-0479">Metal-binding</keyword>
<keyword id="KW-0560">Oxidoreductase</keyword>
<feature type="chain" id="PRO_1000145910" description="DNA protection during starvation protein">
    <location>
        <begin position="1"/>
        <end position="167"/>
    </location>
</feature>
<feature type="binding site" evidence="1">
    <location>
        <position position="51"/>
    </location>
    <ligand>
        <name>Fe cation</name>
        <dbReference type="ChEBI" id="CHEBI:24875"/>
    </ligand>
</feature>
<feature type="binding site" evidence="1">
    <location>
        <position position="78"/>
    </location>
    <ligand>
        <name>Fe cation</name>
        <dbReference type="ChEBI" id="CHEBI:24875"/>
    </ligand>
</feature>
<feature type="binding site" evidence="1">
    <location>
        <position position="82"/>
    </location>
    <ligand>
        <name>Fe cation</name>
        <dbReference type="ChEBI" id="CHEBI:24875"/>
    </ligand>
</feature>
<reference key="1">
    <citation type="journal article" date="2011" name="J. Bacteriol.">
        <title>Comparative genomics of 28 Salmonella enterica isolates: evidence for CRISPR-mediated adaptive sublineage evolution.</title>
        <authorList>
            <person name="Fricke W.F."/>
            <person name="Mammel M.K."/>
            <person name="McDermott P.F."/>
            <person name="Tartera C."/>
            <person name="White D.G."/>
            <person name="Leclerc J.E."/>
            <person name="Ravel J."/>
            <person name="Cebula T.A."/>
        </authorList>
    </citation>
    <scope>NUCLEOTIDE SEQUENCE [LARGE SCALE GENOMIC DNA]</scope>
    <source>
        <strain>CT_02021853</strain>
    </source>
</reference>
<name>DPS_SALDC</name>
<dbReference type="EC" id="1.16.-.-" evidence="1"/>
<dbReference type="EMBL" id="CP001144">
    <property type="protein sequence ID" value="ACH73818.1"/>
    <property type="molecule type" value="Genomic_DNA"/>
</dbReference>
<dbReference type="RefSeq" id="WP_000100805.1">
    <property type="nucleotide sequence ID" value="NC_011205.1"/>
</dbReference>
<dbReference type="SMR" id="B5FP96"/>
<dbReference type="KEGG" id="sed:SeD_A0926"/>
<dbReference type="HOGENOM" id="CLU_098183_1_2_6"/>
<dbReference type="Proteomes" id="UP000008322">
    <property type="component" value="Chromosome"/>
</dbReference>
<dbReference type="GO" id="GO:0005737">
    <property type="term" value="C:cytoplasm"/>
    <property type="evidence" value="ECO:0007669"/>
    <property type="project" value="UniProtKB-SubCell"/>
</dbReference>
<dbReference type="GO" id="GO:0003677">
    <property type="term" value="F:DNA binding"/>
    <property type="evidence" value="ECO:0007669"/>
    <property type="project" value="UniProtKB-UniRule"/>
</dbReference>
<dbReference type="GO" id="GO:0008199">
    <property type="term" value="F:ferric iron binding"/>
    <property type="evidence" value="ECO:0007669"/>
    <property type="project" value="UniProtKB-UniRule"/>
</dbReference>
<dbReference type="GO" id="GO:0016722">
    <property type="term" value="F:oxidoreductase activity, acting on metal ions"/>
    <property type="evidence" value="ECO:0007669"/>
    <property type="project" value="InterPro"/>
</dbReference>
<dbReference type="GO" id="GO:0030261">
    <property type="term" value="P:chromosome condensation"/>
    <property type="evidence" value="ECO:0007669"/>
    <property type="project" value="UniProtKB-KW"/>
</dbReference>
<dbReference type="GO" id="GO:0006879">
    <property type="term" value="P:intracellular iron ion homeostasis"/>
    <property type="evidence" value="ECO:0007669"/>
    <property type="project" value="UniProtKB-KW"/>
</dbReference>
<dbReference type="CDD" id="cd01043">
    <property type="entry name" value="DPS"/>
    <property type="match status" value="1"/>
</dbReference>
<dbReference type="FunFam" id="1.20.1260.10:FF:000003">
    <property type="entry name" value="DNA protection during starvation protein"/>
    <property type="match status" value="1"/>
</dbReference>
<dbReference type="Gene3D" id="1.20.1260.10">
    <property type="match status" value="1"/>
</dbReference>
<dbReference type="HAMAP" id="MF_01441">
    <property type="entry name" value="Dps"/>
    <property type="match status" value="1"/>
</dbReference>
<dbReference type="InterPro" id="IPR002177">
    <property type="entry name" value="DPS_DNA-bd"/>
</dbReference>
<dbReference type="InterPro" id="IPR023188">
    <property type="entry name" value="DPS_DNA-bd_CS"/>
</dbReference>
<dbReference type="InterPro" id="IPR023067">
    <property type="entry name" value="Dps_gammaproteobac"/>
</dbReference>
<dbReference type="InterPro" id="IPR012347">
    <property type="entry name" value="Ferritin-like"/>
</dbReference>
<dbReference type="InterPro" id="IPR009078">
    <property type="entry name" value="Ferritin-like_SF"/>
</dbReference>
<dbReference type="InterPro" id="IPR008331">
    <property type="entry name" value="Ferritin_DPS_dom"/>
</dbReference>
<dbReference type="NCBIfam" id="NF006975">
    <property type="entry name" value="PRK09448.1"/>
    <property type="match status" value="1"/>
</dbReference>
<dbReference type="PANTHER" id="PTHR42932:SF3">
    <property type="entry name" value="DNA PROTECTION DURING STARVATION PROTEIN"/>
    <property type="match status" value="1"/>
</dbReference>
<dbReference type="PANTHER" id="PTHR42932">
    <property type="entry name" value="GENERAL STRESS PROTEIN 20U"/>
    <property type="match status" value="1"/>
</dbReference>
<dbReference type="Pfam" id="PF00210">
    <property type="entry name" value="Ferritin"/>
    <property type="match status" value="1"/>
</dbReference>
<dbReference type="PIRSF" id="PIRSF005900">
    <property type="entry name" value="Dps"/>
    <property type="match status" value="1"/>
</dbReference>
<dbReference type="PRINTS" id="PR01346">
    <property type="entry name" value="HELNAPAPROT"/>
</dbReference>
<dbReference type="SUPFAM" id="SSF47240">
    <property type="entry name" value="Ferritin-like"/>
    <property type="match status" value="1"/>
</dbReference>
<dbReference type="PROSITE" id="PS00818">
    <property type="entry name" value="DPS_1"/>
    <property type="match status" value="1"/>
</dbReference>
<dbReference type="PROSITE" id="PS00819">
    <property type="entry name" value="DPS_2"/>
    <property type="match status" value="1"/>
</dbReference>
<protein>
    <recommendedName>
        <fullName evidence="1">DNA protection during starvation protein</fullName>
        <ecNumber evidence="1">1.16.-.-</ecNumber>
    </recommendedName>
</protein>
<accession>B5FP96</accession>
<evidence type="ECO:0000255" key="1">
    <source>
        <dbReference type="HAMAP-Rule" id="MF_01441"/>
    </source>
</evidence>
<gene>
    <name evidence="1" type="primary">dps</name>
    <name type="ordered locus">SeD_A0926</name>
</gene>
<sequence>MSTAKLVKTKASNLLYTRNDVSESDKKATVELLNRQVIQFIDLSLITKQAHWNMRGANFIAVHEMLDGFRTALTDHLDTMAERAVQLGGVALGTTQVINSKTPLKSYPLDIHNVQDHLKELADRYAVVANDVRKAIGEAKDEDTADIFTAASRDLDKFLWFIESNIE</sequence>
<comment type="function">
    <text evidence="1">During stationary phase, binds the chromosome non-specifically, forming a highly ordered and stable dps-DNA co-crystal within which chromosomal DNA is condensed and protected from diverse damages. It protects DNA from oxidative damage by sequestering intracellular Fe(2+) ion and storing it in the form of Fe(3+) oxyhydroxide mineral, which can be released after reduction. One hydrogen peroxide oxidizes two Fe(2+) ions, which prevents hydroxyl radical production by the Fenton reaction.</text>
</comment>
<comment type="catalytic activity">
    <reaction evidence="1">
        <text>2 Fe(2+) + H2O2 + 2 H(+) = 2 Fe(3+) + 2 H2O</text>
        <dbReference type="Rhea" id="RHEA:48712"/>
        <dbReference type="ChEBI" id="CHEBI:15377"/>
        <dbReference type="ChEBI" id="CHEBI:15378"/>
        <dbReference type="ChEBI" id="CHEBI:16240"/>
        <dbReference type="ChEBI" id="CHEBI:29033"/>
        <dbReference type="ChEBI" id="CHEBI:29034"/>
    </reaction>
</comment>
<comment type="subunit">
    <text evidence="1">Homododecamer. The 12 subunits form a hollow sphere into which the mineral iron core of up to 500 Fe(3+) can be deposited.</text>
</comment>
<comment type="subcellular location">
    <subcellularLocation>
        <location evidence="1">Cytoplasm</location>
    </subcellularLocation>
</comment>
<comment type="similarity">
    <text evidence="1">Belongs to the Dps family.</text>
</comment>